<name>HYPF_METJA</name>
<organism>
    <name type="scientific">Methanocaldococcus jannaschii (strain ATCC 43067 / DSM 2661 / JAL-1 / JCM 10045 / NBRC 100440)</name>
    <name type="common">Methanococcus jannaschii</name>
    <dbReference type="NCBI Taxonomy" id="243232"/>
    <lineage>
        <taxon>Archaea</taxon>
        <taxon>Methanobacteriati</taxon>
        <taxon>Methanobacteriota</taxon>
        <taxon>Methanomada group</taxon>
        <taxon>Methanococci</taxon>
        <taxon>Methanococcales</taxon>
        <taxon>Methanocaldococcaceae</taxon>
        <taxon>Methanocaldococcus</taxon>
    </lineage>
</organism>
<dbReference type="EC" id="6.2.-.-" evidence="1"/>
<dbReference type="EMBL" id="L77117">
    <property type="protein sequence ID" value="AAB98708.1"/>
    <property type="molecule type" value="Genomic_DNA"/>
</dbReference>
<dbReference type="PIR" id="A64389">
    <property type="entry name" value="A64389"/>
</dbReference>
<dbReference type="SMR" id="Q58123"/>
<dbReference type="FunCoup" id="Q58123">
    <property type="interactions" value="4"/>
</dbReference>
<dbReference type="STRING" id="243232.MJ_0713"/>
<dbReference type="PaxDb" id="243232-MJ_0713"/>
<dbReference type="EnsemblBacteria" id="AAB98708">
    <property type="protein sequence ID" value="AAB98708"/>
    <property type="gene ID" value="MJ_0713"/>
</dbReference>
<dbReference type="KEGG" id="mja:MJ_0713"/>
<dbReference type="eggNOG" id="arCOG01187">
    <property type="taxonomic scope" value="Archaea"/>
</dbReference>
<dbReference type="HOGENOM" id="CLU_009164_0_0_2"/>
<dbReference type="InParanoid" id="Q58123"/>
<dbReference type="PhylomeDB" id="Q58123"/>
<dbReference type="UniPathway" id="UPA00335"/>
<dbReference type="Proteomes" id="UP000000805">
    <property type="component" value="Chromosome"/>
</dbReference>
<dbReference type="GO" id="GO:0016743">
    <property type="term" value="F:carboxyl- or carbamoyltransferase activity"/>
    <property type="evidence" value="ECO:0000318"/>
    <property type="project" value="GO_Central"/>
</dbReference>
<dbReference type="GO" id="GO:0003725">
    <property type="term" value="F:double-stranded RNA binding"/>
    <property type="evidence" value="ECO:0007669"/>
    <property type="project" value="InterPro"/>
</dbReference>
<dbReference type="GO" id="GO:0016874">
    <property type="term" value="F:ligase activity"/>
    <property type="evidence" value="ECO:0007669"/>
    <property type="project" value="UniProtKB-KW"/>
</dbReference>
<dbReference type="GO" id="GO:0008270">
    <property type="term" value="F:zinc ion binding"/>
    <property type="evidence" value="ECO:0000318"/>
    <property type="project" value="GO_Central"/>
</dbReference>
<dbReference type="GO" id="GO:0051604">
    <property type="term" value="P:protein maturation"/>
    <property type="evidence" value="ECO:0000318"/>
    <property type="project" value="GO_Central"/>
</dbReference>
<dbReference type="FunFam" id="3.30.420.40:FF:000124">
    <property type="entry name" value="Carbamoyltransferase HypF"/>
    <property type="match status" value="1"/>
</dbReference>
<dbReference type="Gene3D" id="3.30.110.120">
    <property type="match status" value="1"/>
</dbReference>
<dbReference type="Gene3D" id="3.30.420.360">
    <property type="match status" value="1"/>
</dbReference>
<dbReference type="Gene3D" id="3.30.420.40">
    <property type="match status" value="1"/>
</dbReference>
<dbReference type="Gene3D" id="3.90.870.50">
    <property type="match status" value="1"/>
</dbReference>
<dbReference type="InterPro" id="IPR001792">
    <property type="entry name" value="Acylphosphatase-like_dom"/>
</dbReference>
<dbReference type="InterPro" id="IPR036046">
    <property type="entry name" value="Acylphosphatase-like_dom_sf"/>
</dbReference>
<dbReference type="InterPro" id="IPR017968">
    <property type="entry name" value="Acylphosphatase_CS"/>
</dbReference>
<dbReference type="InterPro" id="IPR043129">
    <property type="entry name" value="ATPase_NBD"/>
</dbReference>
<dbReference type="InterPro" id="IPR051060">
    <property type="entry name" value="Carbamoyltrans_HypF-like"/>
</dbReference>
<dbReference type="InterPro" id="IPR004421">
    <property type="entry name" value="Carbamoyltransferase_HypF"/>
</dbReference>
<dbReference type="InterPro" id="IPR017945">
    <property type="entry name" value="DHBP_synth_RibB-like_a/b_dom"/>
</dbReference>
<dbReference type="InterPro" id="IPR041440">
    <property type="entry name" value="HypF_C"/>
</dbReference>
<dbReference type="InterPro" id="IPR055128">
    <property type="entry name" value="HypF_C_2"/>
</dbReference>
<dbReference type="InterPro" id="IPR006070">
    <property type="entry name" value="Sua5-like_dom"/>
</dbReference>
<dbReference type="InterPro" id="IPR011125">
    <property type="entry name" value="Znf_HypF"/>
</dbReference>
<dbReference type="NCBIfam" id="TIGR00143">
    <property type="entry name" value="hypF"/>
    <property type="match status" value="1"/>
</dbReference>
<dbReference type="PANTHER" id="PTHR42959">
    <property type="entry name" value="CARBAMOYLTRANSFERASE"/>
    <property type="match status" value="1"/>
</dbReference>
<dbReference type="PANTHER" id="PTHR42959:SF1">
    <property type="entry name" value="CARBAMOYLTRANSFERASE HYPF"/>
    <property type="match status" value="1"/>
</dbReference>
<dbReference type="Pfam" id="PF00708">
    <property type="entry name" value="Acylphosphatase"/>
    <property type="match status" value="1"/>
</dbReference>
<dbReference type="Pfam" id="PF17788">
    <property type="entry name" value="HypF_C"/>
    <property type="match status" value="1"/>
</dbReference>
<dbReference type="Pfam" id="PF22521">
    <property type="entry name" value="HypF_C_2"/>
    <property type="match status" value="1"/>
</dbReference>
<dbReference type="Pfam" id="PF01300">
    <property type="entry name" value="Sua5_yciO_yrdC"/>
    <property type="match status" value="1"/>
</dbReference>
<dbReference type="Pfam" id="PF07503">
    <property type="entry name" value="zf-HYPF"/>
    <property type="match status" value="2"/>
</dbReference>
<dbReference type="PIRSF" id="PIRSF006256">
    <property type="entry name" value="CMPcnvr_hdrg_mat"/>
    <property type="match status" value="1"/>
</dbReference>
<dbReference type="SUPFAM" id="SSF53067">
    <property type="entry name" value="Actin-like ATPase domain"/>
    <property type="match status" value="1"/>
</dbReference>
<dbReference type="SUPFAM" id="SSF54975">
    <property type="entry name" value="Acylphosphatase/BLUF domain-like"/>
    <property type="match status" value="1"/>
</dbReference>
<dbReference type="SUPFAM" id="SSF55821">
    <property type="entry name" value="YrdC/RibB"/>
    <property type="match status" value="1"/>
</dbReference>
<dbReference type="PROSITE" id="PS00150">
    <property type="entry name" value="ACYLPHOSPHATASE_1"/>
    <property type="match status" value="1"/>
</dbReference>
<dbReference type="PROSITE" id="PS51160">
    <property type="entry name" value="ACYLPHOSPHATASE_3"/>
    <property type="match status" value="1"/>
</dbReference>
<dbReference type="PROSITE" id="PS51163">
    <property type="entry name" value="YRDC"/>
    <property type="match status" value="1"/>
</dbReference>
<accession>Q58123</accession>
<protein>
    <recommendedName>
        <fullName evidence="1">Probable carbamoyltransferase HypF</fullName>
        <ecNumber evidence="1">6.2.-.-</ecNumber>
    </recommendedName>
    <alternativeName>
        <fullName>Carbamoyl phosphate-converting enzyme HypF</fullName>
    </alternativeName>
    <alternativeName>
        <fullName>[NiFe]-hydrogenase maturation factor HypF</fullName>
        <shortName>Hydrogenase maturation protein HypF</shortName>
    </alternativeName>
</protein>
<evidence type="ECO:0000250" key="1">
    <source>
        <dbReference type="UniProtKB" id="P30131"/>
    </source>
</evidence>
<evidence type="ECO:0000255" key="2">
    <source>
        <dbReference type="PROSITE-ProRule" id="PRU00518"/>
    </source>
</evidence>
<evidence type="ECO:0000255" key="3">
    <source>
        <dbReference type="PROSITE-ProRule" id="PRU00520"/>
    </source>
</evidence>
<evidence type="ECO:0000305" key="4"/>
<gene>
    <name type="primary">hypF</name>
    <name type="ordered locus">MJ0713</name>
</gene>
<feature type="chain" id="PRO_0000071619" description="Probable carbamoyltransferase HypF">
    <location>
        <begin position="1"/>
        <end position="766"/>
    </location>
</feature>
<feature type="domain" description="Acylphosphatase-like" evidence="3">
    <location>
        <begin position="11"/>
        <end position="98"/>
    </location>
</feature>
<feature type="domain" description="YrdC-like" evidence="2">
    <location>
        <begin position="209"/>
        <end position="393"/>
    </location>
</feature>
<feature type="zinc finger region" description="C4-type" evidence="1">
    <location>
        <begin position="117"/>
        <end position="142"/>
    </location>
</feature>
<feature type="zinc finger region" description="C4-type" evidence="1">
    <location>
        <begin position="167"/>
        <end position="192"/>
    </location>
</feature>
<proteinExistence type="inferred from homology"/>
<reference key="1">
    <citation type="journal article" date="1996" name="Science">
        <title>Complete genome sequence of the methanogenic archaeon, Methanococcus jannaschii.</title>
        <authorList>
            <person name="Bult C.J."/>
            <person name="White O."/>
            <person name="Olsen G.J."/>
            <person name="Zhou L."/>
            <person name="Fleischmann R.D."/>
            <person name="Sutton G.G."/>
            <person name="Blake J.A."/>
            <person name="FitzGerald L.M."/>
            <person name="Clayton R.A."/>
            <person name="Gocayne J.D."/>
            <person name="Kerlavage A.R."/>
            <person name="Dougherty B.A."/>
            <person name="Tomb J.-F."/>
            <person name="Adams M.D."/>
            <person name="Reich C.I."/>
            <person name="Overbeek R."/>
            <person name="Kirkness E.F."/>
            <person name="Weinstock K.G."/>
            <person name="Merrick J.M."/>
            <person name="Glodek A."/>
            <person name="Scott J.L."/>
            <person name="Geoghagen N.S.M."/>
            <person name="Weidman J.F."/>
            <person name="Fuhrmann J.L."/>
            <person name="Nguyen D."/>
            <person name="Utterback T.R."/>
            <person name="Kelley J.M."/>
            <person name="Peterson J.D."/>
            <person name="Sadow P.W."/>
            <person name="Hanna M.C."/>
            <person name="Cotton M.D."/>
            <person name="Roberts K.M."/>
            <person name="Hurst M.A."/>
            <person name="Kaine B.P."/>
            <person name="Borodovsky M."/>
            <person name="Klenk H.-P."/>
            <person name="Fraser C.M."/>
            <person name="Smith H.O."/>
            <person name="Woese C.R."/>
            <person name="Venter J.C."/>
        </authorList>
    </citation>
    <scope>NUCLEOTIDE SEQUENCE [LARGE SCALE GENOMIC DNA]</scope>
    <source>
        <strain>ATCC 43067 / DSM 2661 / JAL-1 / JCM 10045 / NBRC 100440</strain>
    </source>
</reference>
<comment type="function">
    <text evidence="1">Involved in the maturation of [NiFe] hydrogenases. Along with HypE, it catalyzes the synthesis of the CN ligands of the active site iron of [NiFe]-hydrogenases. HypF functions as a carbamoyl transferase using carbamoylphosphate as a substrate and transferring the carboxamido moiety in an ATP-dependent reaction to the thiolate of the C-terminal cysteine of HypE yielding a protein-S-carboxamide.</text>
</comment>
<comment type="catalytic activity">
    <reaction evidence="1">
        <text>C-terminal L-cysteinyl-[HypE protein] + carbamoyl phosphate + ATP + H2O = C-terminal S-carboxamide-L-cysteinyl-[HypE protein] + AMP + phosphate + diphosphate + H(+)</text>
        <dbReference type="Rhea" id="RHEA:55636"/>
        <dbReference type="Rhea" id="RHEA-COMP:14247"/>
        <dbReference type="Rhea" id="RHEA-COMP:14392"/>
        <dbReference type="ChEBI" id="CHEBI:15377"/>
        <dbReference type="ChEBI" id="CHEBI:15378"/>
        <dbReference type="ChEBI" id="CHEBI:30616"/>
        <dbReference type="ChEBI" id="CHEBI:33019"/>
        <dbReference type="ChEBI" id="CHEBI:43474"/>
        <dbReference type="ChEBI" id="CHEBI:58228"/>
        <dbReference type="ChEBI" id="CHEBI:76913"/>
        <dbReference type="ChEBI" id="CHEBI:139126"/>
        <dbReference type="ChEBI" id="CHEBI:456215"/>
    </reaction>
</comment>
<comment type="pathway">
    <text evidence="1">Protein modification; [NiFe] hydrogenase maturation.</text>
</comment>
<comment type="similarity">
    <text evidence="4">Belongs to the carbamoyltransferase HypF family.</text>
</comment>
<sequence>MEILFFGVKMKVRIKVKGIVQGVGFRPFVYRIAKKNNLKGYVKNMGNYVEILIEGKKEDIRNFINDLKNKKPPLSRIDKLDIEEIKGIEEFDDFYIIKSENAKDEEEGTIPADVAICDDCLKEMLDKNDRRYRYPFIACTNCGPRFTIVEKLPYDRENTSMRDFPLCEKCLEEYKNPLDRRFHAQATCCPICGPKVFLSDGKEIIAEKDEAIRETVKLLEEGHILAIKGIGGTHLACKVGEDDVVLELRKRLGRPTQPFAVMSKIEYTELFAEFDEDEKNALLSLRRPIVVLKKSQDYDKYFSKYVSNLDTIGVMFPYSGLHYLLFDKEIAYVMTSANLPGLPMVKDNDEILKKLNGIADYFLLHNRRIVNRCDDSVVKKVADRLVFLRRSRGFAPEPVKVNINNNKNILCVGAELNSTACIVKRDKFYLTQYIGNTSKYETFCYLRDAINNILRLTNTNKIDAIVCDLHPQFNSTKLAEELSEKFGAEIFRVQHHFAHAYSLLGDNNYFDDAIILSLDGVGYGLDGNIWGGEVLLFKDGKMERVGHLEEQYQLGGDLATKYPLRMLLSILYKAIGEEAFDFIKRYNFFSEKELRLLKFQLEKKLNCPITTSTGRVLDAVSALLGICFEKTYDGEPSIRLEPVANRFKGDINIEPKIKNNILNTTELIYKSYEMLLNNENKEKIAHFAHIYIADGLFEIAKKISNKFGINTIGITGGVSYNKIITERIMNNAKREGFNFIYHQRVPNGDGGISFGQGVAYILKNGY</sequence>
<keyword id="KW-0436">Ligase</keyword>
<keyword id="KW-0479">Metal-binding</keyword>
<keyword id="KW-1185">Reference proteome</keyword>
<keyword id="KW-0862">Zinc</keyword>
<keyword id="KW-0863">Zinc-finger</keyword>